<sequence length="115" mass="12696">MLDDNSQDISIPEAVVVLCTAPDEATAQDLAAKVLAEKLAACATLLPGATSLYYWEGKLEQEYEVQMILKTTVSHQQALLECLKSHHPYQTPELLVLPVTHGDTDYLSWLNASLR</sequence>
<organism>
    <name type="scientific">Citrobacter koseri (strain ATCC BAA-895 / CDC 4225-83 / SGSC4696)</name>
    <dbReference type="NCBI Taxonomy" id="290338"/>
    <lineage>
        <taxon>Bacteria</taxon>
        <taxon>Pseudomonadati</taxon>
        <taxon>Pseudomonadota</taxon>
        <taxon>Gammaproteobacteria</taxon>
        <taxon>Enterobacterales</taxon>
        <taxon>Enterobacteriaceae</taxon>
        <taxon>Citrobacter</taxon>
    </lineage>
</organism>
<dbReference type="EMBL" id="CP000822">
    <property type="protein sequence ID" value="ABV14776.1"/>
    <property type="molecule type" value="Genomic_DNA"/>
</dbReference>
<dbReference type="RefSeq" id="WP_012134473.1">
    <property type="nucleotide sequence ID" value="NC_009792.1"/>
</dbReference>
<dbReference type="SMR" id="A8AMR3"/>
<dbReference type="STRING" id="290338.CKO_03699"/>
<dbReference type="GeneID" id="45137401"/>
<dbReference type="KEGG" id="cko:CKO_03699"/>
<dbReference type="HOGENOM" id="CLU_098807_3_0_6"/>
<dbReference type="OrthoDB" id="37622at2"/>
<dbReference type="Proteomes" id="UP000008148">
    <property type="component" value="Chromosome"/>
</dbReference>
<dbReference type="GO" id="GO:0005737">
    <property type="term" value="C:cytoplasm"/>
    <property type="evidence" value="ECO:0007669"/>
    <property type="project" value="UniProtKB-SubCell"/>
</dbReference>
<dbReference type="GO" id="GO:0005507">
    <property type="term" value="F:copper ion binding"/>
    <property type="evidence" value="ECO:0007669"/>
    <property type="project" value="UniProtKB-UniRule"/>
</dbReference>
<dbReference type="GO" id="GO:0010038">
    <property type="term" value="P:response to metal ion"/>
    <property type="evidence" value="ECO:0007669"/>
    <property type="project" value="InterPro"/>
</dbReference>
<dbReference type="FunFam" id="3.30.70.120:FF:000004">
    <property type="entry name" value="Divalent-cation tolerance protein CutA"/>
    <property type="match status" value="1"/>
</dbReference>
<dbReference type="Gene3D" id="3.30.70.120">
    <property type="match status" value="1"/>
</dbReference>
<dbReference type="HAMAP" id="MF_01160">
    <property type="entry name" value="CutA"/>
    <property type="match status" value="1"/>
</dbReference>
<dbReference type="InterPro" id="IPR023700">
    <property type="entry name" value="CutA_Enterobact"/>
</dbReference>
<dbReference type="InterPro" id="IPR004323">
    <property type="entry name" value="Ion_tolerance_CutA"/>
</dbReference>
<dbReference type="InterPro" id="IPR011322">
    <property type="entry name" value="N-reg_PII-like_a/b"/>
</dbReference>
<dbReference type="InterPro" id="IPR015867">
    <property type="entry name" value="N-reg_PII/ATP_PRibTrfase_C"/>
</dbReference>
<dbReference type="NCBIfam" id="NF007930">
    <property type="entry name" value="PRK10645.1"/>
    <property type="match status" value="1"/>
</dbReference>
<dbReference type="PANTHER" id="PTHR23419">
    <property type="entry name" value="DIVALENT CATION TOLERANCE CUTA-RELATED"/>
    <property type="match status" value="1"/>
</dbReference>
<dbReference type="PANTHER" id="PTHR23419:SF8">
    <property type="entry name" value="FI09726P"/>
    <property type="match status" value="1"/>
</dbReference>
<dbReference type="Pfam" id="PF03091">
    <property type="entry name" value="CutA1"/>
    <property type="match status" value="1"/>
</dbReference>
<dbReference type="SUPFAM" id="SSF54913">
    <property type="entry name" value="GlnB-like"/>
    <property type="match status" value="1"/>
</dbReference>
<keyword id="KW-0186">Copper</keyword>
<keyword id="KW-0963">Cytoplasm</keyword>
<keyword id="KW-0479">Metal-binding</keyword>
<keyword id="KW-1185">Reference proteome</keyword>
<protein>
    <recommendedName>
        <fullName evidence="1">Divalent-cation tolerance protein CutA</fullName>
    </recommendedName>
</protein>
<name>CUTA_CITK8</name>
<comment type="function">
    <text evidence="1">Involved in resistance toward heavy metals.</text>
</comment>
<comment type="cofactor">
    <cofactor evidence="1">
        <name>Cu cation</name>
        <dbReference type="ChEBI" id="CHEBI:23378"/>
    </cofactor>
    <text evidence="1">Binds 1 copper ion per subunit.</text>
</comment>
<comment type="subunit">
    <text evidence="1">Homotrimer.</text>
</comment>
<comment type="subcellular location">
    <subcellularLocation>
        <location evidence="1">Cytoplasm</location>
    </subcellularLocation>
</comment>
<comment type="similarity">
    <text evidence="1">Belongs to the CutA family.</text>
</comment>
<evidence type="ECO:0000255" key="1">
    <source>
        <dbReference type="HAMAP-Rule" id="MF_01160"/>
    </source>
</evidence>
<gene>
    <name evidence="1" type="primary">cutA</name>
    <name type="ordered locus">CKO_03699</name>
</gene>
<feature type="chain" id="PRO_1000065596" description="Divalent-cation tolerance protein CutA">
    <location>
        <begin position="1"/>
        <end position="115"/>
    </location>
</feature>
<feature type="binding site" evidence="1">
    <location>
        <position position="19"/>
    </location>
    <ligand>
        <name>Cu cation</name>
        <dbReference type="ChEBI" id="CHEBI:23378"/>
    </ligand>
</feature>
<feature type="binding site" evidence="1">
    <location>
        <position position="86"/>
    </location>
    <ligand>
        <name>Cu cation</name>
        <dbReference type="ChEBI" id="CHEBI:23378"/>
    </ligand>
</feature>
<feature type="binding site" evidence="1">
    <location>
        <position position="87"/>
    </location>
    <ligand>
        <name>Cu cation</name>
        <dbReference type="ChEBI" id="CHEBI:23378"/>
    </ligand>
</feature>
<reference key="1">
    <citation type="submission" date="2007-08" db="EMBL/GenBank/DDBJ databases">
        <authorList>
            <consortium name="The Citrobacter koseri Genome Sequencing Project"/>
            <person name="McClelland M."/>
            <person name="Sanderson E.K."/>
            <person name="Porwollik S."/>
            <person name="Spieth J."/>
            <person name="Clifton W.S."/>
            <person name="Latreille P."/>
            <person name="Courtney L."/>
            <person name="Wang C."/>
            <person name="Pepin K."/>
            <person name="Bhonagiri V."/>
            <person name="Nash W."/>
            <person name="Johnson M."/>
            <person name="Thiruvilangam P."/>
            <person name="Wilson R."/>
        </authorList>
    </citation>
    <scope>NUCLEOTIDE SEQUENCE [LARGE SCALE GENOMIC DNA]</scope>
    <source>
        <strain>ATCC BAA-895 / CDC 4225-83 / SGSC4696</strain>
    </source>
</reference>
<accession>A8AMR3</accession>
<proteinExistence type="inferred from homology"/>